<accession>V5NAL9</accession>
<keyword id="KW-1003">Cell membrane</keyword>
<keyword id="KW-0325">Glycoprotein</keyword>
<keyword id="KW-0391">Immunity</keyword>
<keyword id="KW-0399">Innate immunity</keyword>
<keyword id="KW-0433">Leucine-rich repeat</keyword>
<keyword id="KW-0472">Membrane</keyword>
<keyword id="KW-0520">NAD</keyword>
<keyword id="KW-0675">Receptor</keyword>
<keyword id="KW-0677">Repeat</keyword>
<keyword id="KW-0732">Signal</keyword>
<keyword id="KW-0812">Transmembrane</keyword>
<keyword id="KW-1133">Transmembrane helix</keyword>
<protein>
    <recommendedName>
        <fullName evidence="6">Toll-like receptor 4</fullName>
    </recommendedName>
    <alternativeName>
        <fullName evidence="7">PmTLR4</fullName>
    </alternativeName>
</protein>
<sequence>MCPLQIHVLHLIQGNQKNRKGKYVNMTRQLWYILPLLFLLCHCVTSERRCYFSKISKTCSHASKCLLKADCSDRNLTESPKFNESVVQIDLSNNSINVFPDLPRSLLVLDISRNPLKQFQKNAFARLQNLTTLSIVNNTYGLQPSNLTAGIFKGLTRLTYLDLRGSWNGTAYPEEVLSDLVSLNALRINGKQKGFGVLMRKIHALKRLDISGSEGDCKIDCLHAGYFQNVHGIQELNVSNCHLTNILEGTFSYITNLTHLDISYNEELSFNILRNISKDLKNTKIEVLKINKIHCTFGVGTQIYVSDLKDLQNTSLRELHANSNRLETIQSGVLMYLPKTLQHASVSDNKLTMGMYALETANLVNLKTYDMSLQFKSHDPRDIFSNCNDTRNGYIRNRRPHESEGEISVRKKLLNDQIYRWKDDQAFEVYQNTSNNNQHKLMFPFPSPFPVPLPQRLEIAYFNTSTLHYPLLKYRIGNNKIKEIYAQDNVFYDLQGPLENLEGLEILDLSNNFCTNLSTFFFDYLTGLKSVKLNHNILGFSLAKDEKGETFKNLLKLKHLEIKYNRIQVLPKKILRNLISLETLDLADNWLRKFKVDLKHIKGLRHIDLSNNQISELPPGVMRELDEIAKSSNLTVNLTGNSLLCNCENEHFLRWIVTSTIRFGFHGNDTCQTRFSKTGRVLMSQGNEFLLVLERNCRSYTAVIVLFSCVFVILLTVIVCGVVYRYRWKLRYLYYMTKGRYKGYSSLKTKSEEGDYEFDAFISYADEDRQFALHDMMKNVEREGNLKLCFHNRDFIPGFDIAVNITNAINNSRKTICVISSNYLNSYWCMYELNIGRMESIYSRNGEDVLFLVILENCSSSNIPFSVFDIIEKKSYIEYPNDTEGDIIFWRKLRDPISM</sequence>
<reference evidence="8" key="1">
    <citation type="journal article" date="2017" name="Comp. Biochem. Physiol.">
        <title>A novel toll-like receptor from the pearl oyster Pinctada fucata martensii is induced in response to stress.</title>
        <authorList>
            <person name="Wu Y."/>
            <person name="Liang H."/>
            <person name="Wang Z."/>
            <person name="Lei Q."/>
            <person name="Xia L."/>
        </authorList>
    </citation>
    <scope>NUCLEOTIDE SEQUENCE [MRNA]</scope>
    <scope>FUNCTION</scope>
    <scope>TISSUE SPECIFICITY</scope>
    <scope>INDUCTION</scope>
</reference>
<feature type="signal peptide" evidence="2">
    <location>
        <begin position="1"/>
        <end position="46"/>
    </location>
</feature>
<feature type="chain" id="PRO_0000444011" description="Toll-like receptor 4" evidence="2">
    <location>
        <begin position="47"/>
        <end position="899"/>
    </location>
</feature>
<feature type="topological domain" description="Extracellular" evidence="6">
    <location>
        <begin position="47"/>
        <end position="702"/>
    </location>
</feature>
<feature type="transmembrane region" description="Helical" evidence="2">
    <location>
        <begin position="703"/>
        <end position="723"/>
    </location>
</feature>
<feature type="topological domain" description="Cytoplasmic" evidence="6">
    <location>
        <begin position="724"/>
        <end position="899"/>
    </location>
</feature>
<feature type="repeat" description="LRR 1" evidence="2">
    <location>
        <begin position="83"/>
        <end position="103"/>
    </location>
</feature>
<feature type="repeat" description="LRR 2" evidence="2">
    <location>
        <begin position="104"/>
        <end position="126"/>
    </location>
</feature>
<feature type="repeat" description="LRR 3" evidence="2">
    <location>
        <begin position="128"/>
        <end position="150"/>
    </location>
</feature>
<feature type="repeat" description="LRR 4" evidence="2">
    <location>
        <begin position="155"/>
        <end position="179"/>
    </location>
</feature>
<feature type="repeat" description="LRR 5" evidence="2">
    <location>
        <begin position="181"/>
        <end position="202"/>
    </location>
</feature>
<feature type="repeat" description="LRR 6" evidence="2">
    <location>
        <begin position="203"/>
        <end position="229"/>
    </location>
</feature>
<feature type="repeat" description="LRR 7" evidence="2">
    <location>
        <begin position="230"/>
        <end position="253"/>
    </location>
</feature>
<feature type="repeat" description="LRR 8" evidence="2">
    <location>
        <begin position="257"/>
        <end position="282"/>
    </location>
</feature>
<feature type="repeat" description="LRR 9" evidence="2">
    <location>
        <begin position="313"/>
        <end position="336"/>
    </location>
</feature>
<feature type="repeat" description="LRR 10" evidence="2">
    <location>
        <begin position="338"/>
        <end position="360"/>
    </location>
</feature>
<feature type="repeat" description="LRR 11" evidence="2">
    <location>
        <begin position="363"/>
        <end position="386"/>
    </location>
</feature>
<feature type="repeat" description="LRR 12" evidence="2">
    <location>
        <begin position="468"/>
        <end position="493"/>
    </location>
</feature>
<feature type="repeat" description="LRR 13" evidence="2">
    <location>
        <begin position="501"/>
        <end position="524"/>
    </location>
</feature>
<feature type="repeat" description="LRR 14" evidence="2">
    <location>
        <begin position="526"/>
        <end position="549"/>
    </location>
</feature>
<feature type="repeat" description="LRR 15" evidence="2">
    <location>
        <begin position="554"/>
        <end position="577"/>
    </location>
</feature>
<feature type="repeat" description="LRR 16" evidence="2">
    <location>
        <begin position="579"/>
        <end position="601"/>
    </location>
</feature>
<feature type="repeat" description="LRR 17" evidence="2">
    <location>
        <begin position="602"/>
        <end position="624"/>
    </location>
</feature>
<feature type="repeat" description="LRR 18" evidence="2">
    <location>
        <begin position="631"/>
        <end position="654"/>
    </location>
</feature>
<feature type="domain" description="TIR" evidence="3">
    <location>
        <begin position="756"/>
        <end position="897"/>
    </location>
</feature>
<feature type="glycosylation site" description="N-linked (GlcNAc...) asparagine" evidence="4">
    <location>
        <position position="25"/>
    </location>
</feature>
<feature type="glycosylation site" description="N-linked (GlcNAc...) asparagine" evidence="4">
    <location>
        <position position="75"/>
    </location>
</feature>
<feature type="glycosylation site" description="N-linked (GlcNAc...) asparagine" evidence="4">
    <location>
        <position position="83"/>
    </location>
</feature>
<feature type="glycosylation site" description="N-linked (GlcNAc...) asparagine" evidence="4">
    <location>
        <position position="93"/>
    </location>
</feature>
<feature type="glycosylation site" description="N-linked (GlcNAc...) asparagine" evidence="4">
    <location>
        <position position="129"/>
    </location>
</feature>
<feature type="glycosylation site" description="N-linked (GlcNAc...) asparagine" evidence="4">
    <location>
        <position position="137"/>
    </location>
</feature>
<feature type="glycosylation site" description="N-linked (GlcNAc...) asparagine" evidence="4">
    <location>
        <position position="146"/>
    </location>
</feature>
<feature type="glycosylation site" description="N-linked (GlcNAc...) asparagine" evidence="4">
    <location>
        <position position="168"/>
    </location>
</feature>
<feature type="glycosylation site" description="N-linked (GlcNAc...) asparagine" evidence="4">
    <location>
        <position position="237"/>
    </location>
</feature>
<feature type="glycosylation site" description="N-linked (GlcNAc...) asparagine" evidence="4">
    <location>
        <position position="256"/>
    </location>
</feature>
<feature type="glycosylation site" description="N-linked (GlcNAc...) asparagine" evidence="4">
    <location>
        <position position="275"/>
    </location>
</feature>
<feature type="glycosylation site" description="N-linked (GlcNAc...) asparagine" evidence="4">
    <location>
        <position position="313"/>
    </location>
</feature>
<feature type="glycosylation site" description="N-linked (GlcNAc...) asparagine" evidence="4">
    <location>
        <position position="388"/>
    </location>
</feature>
<feature type="glycosylation site" description="N-linked (GlcNAc...) asparagine" evidence="4">
    <location>
        <position position="432"/>
    </location>
</feature>
<feature type="glycosylation site" description="N-linked (GlcNAc...) asparagine" evidence="4">
    <location>
        <position position="463"/>
    </location>
</feature>
<feature type="glycosylation site" description="N-linked (GlcNAc...) asparagine" evidence="4">
    <location>
        <position position="516"/>
    </location>
</feature>
<feature type="glycosylation site" description="N-linked (GlcNAc...) asparagine" evidence="4">
    <location>
        <position position="633"/>
    </location>
</feature>
<feature type="glycosylation site" description="N-linked (GlcNAc...) asparagine" evidence="4">
    <location>
        <position position="637"/>
    </location>
</feature>
<feature type="glycosylation site" description="N-linked (GlcNAc...) asparagine" evidence="4">
    <location>
        <position position="668"/>
    </location>
</feature>
<organism evidence="8">
    <name type="scientific">Pinctada imbricata</name>
    <name type="common">Atlantic pearl-oyster</name>
    <name type="synonym">Pinctada martensii</name>
    <dbReference type="NCBI Taxonomy" id="66713"/>
    <lineage>
        <taxon>Eukaryota</taxon>
        <taxon>Metazoa</taxon>
        <taxon>Spiralia</taxon>
        <taxon>Lophotrochozoa</taxon>
        <taxon>Mollusca</taxon>
        <taxon>Bivalvia</taxon>
        <taxon>Autobranchia</taxon>
        <taxon>Pteriomorphia</taxon>
        <taxon>Pterioida</taxon>
        <taxon>Pterioidea</taxon>
        <taxon>Pteriidae</taxon>
        <taxon>Pinctada</taxon>
    </lineage>
</organism>
<proteinExistence type="evidence at transcript level"/>
<comment type="function">
    <text evidence="7">May be involved in the innate immune response.</text>
</comment>
<comment type="subcellular location">
    <subcellularLocation>
        <location evidence="2">Cell membrane</location>
        <topology evidence="2">Single-pass type I membrane protein</topology>
    </subcellularLocation>
</comment>
<comment type="tissue specificity">
    <text evidence="5">Expressed in all tissues tested. The highest expression is in the hepatopancreas, with moderate expression in the gills, and low expression in the gonads, adductor muscle, hemocytes, and mantle.</text>
</comment>
<comment type="induction">
    <text evidence="5">Induced by lipopolysaccharide (LPS) exposure, where expression increases significantly at 3 and 6 hours post-exposure, and gradually decreases to control levels by 12 hours post-exposure. Also induced during the nucleus insertion operation used in pearl culturing, which involves the implantation of a round pearl bead and a piece of mantle tissue from a donor oyster. Expression is highest at 2 days post-insertion and gradually decreases to control levels at 5 days post-insertion, maintaining that level until the end of the experiment at 20 days.</text>
</comment>
<comment type="similarity">
    <text evidence="6">Belongs to the Toll-like receptor family.</text>
</comment>
<comment type="caution">
    <text evidence="1 6">In some plant proteins and in human SARM1, the TIR domain has NAD(+) hydrolase (NADase) activity (By similarity). However, despite the presence of the catalytic Asp residue, the isolated TIR domain of human TLR4 lacks NADase activity (By similarity). Based on this, it is unlikely that Toll-like receptors have NADase activity.</text>
</comment>
<dbReference type="EMBL" id="KF524262">
    <property type="protein sequence ID" value="AHA85007.1"/>
    <property type="molecule type" value="mRNA"/>
</dbReference>
<dbReference type="SMR" id="V5NAL9"/>
<dbReference type="GO" id="GO:0005886">
    <property type="term" value="C:plasma membrane"/>
    <property type="evidence" value="ECO:0007669"/>
    <property type="project" value="UniProtKB-SubCell"/>
</dbReference>
<dbReference type="GO" id="GO:0061809">
    <property type="term" value="F:NAD+ nucleosidase activity, cyclic ADP-ribose generating"/>
    <property type="evidence" value="ECO:0007669"/>
    <property type="project" value="UniProtKB-EC"/>
</dbReference>
<dbReference type="GO" id="GO:0038023">
    <property type="term" value="F:signaling receptor activity"/>
    <property type="evidence" value="ECO:0007669"/>
    <property type="project" value="TreeGrafter"/>
</dbReference>
<dbReference type="GO" id="GO:0045087">
    <property type="term" value="P:innate immune response"/>
    <property type="evidence" value="ECO:0007669"/>
    <property type="project" value="UniProtKB-KW"/>
</dbReference>
<dbReference type="GO" id="GO:0007165">
    <property type="term" value="P:signal transduction"/>
    <property type="evidence" value="ECO:0007669"/>
    <property type="project" value="InterPro"/>
</dbReference>
<dbReference type="FunFam" id="3.40.50.10140:FF:000001">
    <property type="entry name" value="Toll-like receptor 2"/>
    <property type="match status" value="1"/>
</dbReference>
<dbReference type="Gene3D" id="3.80.10.10">
    <property type="entry name" value="Ribonuclease Inhibitor"/>
    <property type="match status" value="5"/>
</dbReference>
<dbReference type="Gene3D" id="3.40.50.10140">
    <property type="entry name" value="Toll/interleukin-1 receptor homology (TIR) domain"/>
    <property type="match status" value="1"/>
</dbReference>
<dbReference type="InterPro" id="IPR001611">
    <property type="entry name" value="Leu-rich_rpt"/>
</dbReference>
<dbReference type="InterPro" id="IPR003591">
    <property type="entry name" value="Leu-rich_rpt_typical-subtyp"/>
</dbReference>
<dbReference type="InterPro" id="IPR032675">
    <property type="entry name" value="LRR_dom_sf"/>
</dbReference>
<dbReference type="InterPro" id="IPR000157">
    <property type="entry name" value="TIR_dom"/>
</dbReference>
<dbReference type="InterPro" id="IPR035897">
    <property type="entry name" value="Toll_tir_struct_dom_sf"/>
</dbReference>
<dbReference type="PANTHER" id="PTHR24365:SF541">
    <property type="entry name" value="PROTEIN TOLL-RELATED"/>
    <property type="match status" value="1"/>
</dbReference>
<dbReference type="PANTHER" id="PTHR24365">
    <property type="entry name" value="TOLL-LIKE RECEPTOR"/>
    <property type="match status" value="1"/>
</dbReference>
<dbReference type="Pfam" id="PF00560">
    <property type="entry name" value="LRR_1"/>
    <property type="match status" value="1"/>
</dbReference>
<dbReference type="Pfam" id="PF13855">
    <property type="entry name" value="LRR_8"/>
    <property type="match status" value="1"/>
</dbReference>
<dbReference type="Pfam" id="PF01582">
    <property type="entry name" value="TIR"/>
    <property type="match status" value="1"/>
</dbReference>
<dbReference type="PRINTS" id="PR01537">
    <property type="entry name" value="INTRLKN1R1F"/>
</dbReference>
<dbReference type="SMART" id="SM00369">
    <property type="entry name" value="LRR_TYP"/>
    <property type="match status" value="7"/>
</dbReference>
<dbReference type="SMART" id="SM00255">
    <property type="entry name" value="TIR"/>
    <property type="match status" value="1"/>
</dbReference>
<dbReference type="SUPFAM" id="SSF52058">
    <property type="entry name" value="L domain-like"/>
    <property type="match status" value="1"/>
</dbReference>
<dbReference type="SUPFAM" id="SSF52047">
    <property type="entry name" value="RNI-like"/>
    <property type="match status" value="1"/>
</dbReference>
<dbReference type="SUPFAM" id="SSF52200">
    <property type="entry name" value="Toll/Interleukin receptor TIR domain"/>
    <property type="match status" value="1"/>
</dbReference>
<dbReference type="PROSITE" id="PS51450">
    <property type="entry name" value="LRR"/>
    <property type="match status" value="8"/>
</dbReference>
<dbReference type="PROSITE" id="PS50104">
    <property type="entry name" value="TIR"/>
    <property type="match status" value="1"/>
</dbReference>
<name>TLR4_PINIB</name>
<evidence type="ECO:0000250" key="1">
    <source>
        <dbReference type="UniProtKB" id="O00206"/>
    </source>
</evidence>
<evidence type="ECO:0000255" key="2"/>
<evidence type="ECO:0000255" key="3">
    <source>
        <dbReference type="PROSITE-ProRule" id="PRU00204"/>
    </source>
</evidence>
<evidence type="ECO:0000255" key="4">
    <source>
        <dbReference type="PROSITE-ProRule" id="PRU00498"/>
    </source>
</evidence>
<evidence type="ECO:0000269" key="5">
    <source>
    </source>
</evidence>
<evidence type="ECO:0000305" key="6"/>
<evidence type="ECO:0000305" key="7">
    <source>
    </source>
</evidence>
<evidence type="ECO:0000312" key="8">
    <source>
        <dbReference type="EMBL" id="AHA85007.1"/>
    </source>
</evidence>